<dbReference type="EMBL" id="AE005674">
    <property type="protein sequence ID" value="AAN45046.1"/>
    <property type="molecule type" value="Genomic_DNA"/>
</dbReference>
<dbReference type="EMBL" id="AE014073">
    <property type="protein sequence ID" value="AAP19141.1"/>
    <property type="molecule type" value="Genomic_DNA"/>
</dbReference>
<dbReference type="RefSeq" id="WP_001191070.1">
    <property type="nucleotide sequence ID" value="NZ_WPGW01000173.1"/>
</dbReference>
<dbReference type="SMR" id="Q83PR0"/>
<dbReference type="STRING" id="198214.SF3595"/>
<dbReference type="PaxDb" id="198214-SF3595"/>
<dbReference type="KEGG" id="sfl:SF3595"/>
<dbReference type="KEGG" id="sfx:S4172"/>
<dbReference type="PATRIC" id="fig|198214.7.peg.4244"/>
<dbReference type="HOGENOM" id="CLU_091292_0_0_6"/>
<dbReference type="Proteomes" id="UP000001006">
    <property type="component" value="Chromosome"/>
</dbReference>
<dbReference type="Proteomes" id="UP000002673">
    <property type="component" value="Chromosome"/>
</dbReference>
<dbReference type="GO" id="GO:0005829">
    <property type="term" value="C:cytosol"/>
    <property type="evidence" value="ECO:0007669"/>
    <property type="project" value="TreeGrafter"/>
</dbReference>
<dbReference type="GO" id="GO:0003700">
    <property type="term" value="F:DNA-binding transcription factor activity"/>
    <property type="evidence" value="ECO:0007669"/>
    <property type="project" value="InterPro"/>
</dbReference>
<dbReference type="GO" id="GO:0000976">
    <property type="term" value="F:transcription cis-regulatory region binding"/>
    <property type="evidence" value="ECO:0007669"/>
    <property type="project" value="TreeGrafter"/>
</dbReference>
<dbReference type="FunFam" id="1.10.10.60:FF:000267">
    <property type="entry name" value="HTH-type transcriptional regulator GadX"/>
    <property type="match status" value="1"/>
</dbReference>
<dbReference type="Gene3D" id="1.10.10.60">
    <property type="entry name" value="Homeodomain-like"/>
    <property type="match status" value="1"/>
</dbReference>
<dbReference type="InterPro" id="IPR009057">
    <property type="entry name" value="Homeodomain-like_sf"/>
</dbReference>
<dbReference type="InterPro" id="IPR018060">
    <property type="entry name" value="HTH_AraC"/>
</dbReference>
<dbReference type="InterPro" id="IPR018062">
    <property type="entry name" value="HTH_AraC-typ_CS"/>
</dbReference>
<dbReference type="InterPro" id="IPR020449">
    <property type="entry name" value="Tscrpt_reg_AraC-type_HTH"/>
</dbReference>
<dbReference type="NCBIfam" id="NF007432">
    <property type="entry name" value="PRK09978.1"/>
    <property type="match status" value="1"/>
</dbReference>
<dbReference type="PANTHER" id="PTHR47894">
    <property type="entry name" value="HTH-TYPE TRANSCRIPTIONAL REGULATOR GADX"/>
    <property type="match status" value="1"/>
</dbReference>
<dbReference type="PANTHER" id="PTHR47894:SF4">
    <property type="entry name" value="HTH-TYPE TRANSCRIPTIONAL REGULATOR GADX"/>
    <property type="match status" value="1"/>
</dbReference>
<dbReference type="Pfam" id="PF12833">
    <property type="entry name" value="HTH_18"/>
    <property type="match status" value="1"/>
</dbReference>
<dbReference type="PRINTS" id="PR00032">
    <property type="entry name" value="HTHARAC"/>
</dbReference>
<dbReference type="SMART" id="SM00342">
    <property type="entry name" value="HTH_ARAC"/>
    <property type="match status" value="1"/>
</dbReference>
<dbReference type="SUPFAM" id="SSF46689">
    <property type="entry name" value="Homeodomain-like"/>
    <property type="match status" value="1"/>
</dbReference>
<dbReference type="PROSITE" id="PS00041">
    <property type="entry name" value="HTH_ARAC_FAMILY_1"/>
    <property type="match status" value="1"/>
</dbReference>
<dbReference type="PROSITE" id="PS01124">
    <property type="entry name" value="HTH_ARAC_FAMILY_2"/>
    <property type="match status" value="1"/>
</dbReference>
<organism>
    <name type="scientific">Shigella flexneri</name>
    <dbReference type="NCBI Taxonomy" id="623"/>
    <lineage>
        <taxon>Bacteria</taxon>
        <taxon>Pseudomonadati</taxon>
        <taxon>Pseudomonadota</taxon>
        <taxon>Gammaproteobacteria</taxon>
        <taxon>Enterobacterales</taxon>
        <taxon>Enterobacteriaceae</taxon>
        <taxon>Shigella</taxon>
    </lineage>
</organism>
<reference key="1">
    <citation type="journal article" date="2002" name="Nucleic Acids Res.">
        <title>Genome sequence of Shigella flexneri 2a: insights into pathogenicity through comparison with genomes of Escherichia coli K12 and O157.</title>
        <authorList>
            <person name="Jin Q."/>
            <person name="Yuan Z."/>
            <person name="Xu J."/>
            <person name="Wang Y."/>
            <person name="Shen Y."/>
            <person name="Lu W."/>
            <person name="Wang J."/>
            <person name="Liu H."/>
            <person name="Yang J."/>
            <person name="Yang F."/>
            <person name="Zhang X."/>
            <person name="Zhang J."/>
            <person name="Yang G."/>
            <person name="Wu H."/>
            <person name="Qu D."/>
            <person name="Dong J."/>
            <person name="Sun L."/>
            <person name="Xue Y."/>
            <person name="Zhao A."/>
            <person name="Gao Y."/>
            <person name="Zhu J."/>
            <person name="Kan B."/>
            <person name="Ding K."/>
            <person name="Chen S."/>
            <person name="Cheng H."/>
            <person name="Yao Z."/>
            <person name="He B."/>
            <person name="Chen R."/>
            <person name="Ma D."/>
            <person name="Qiang B."/>
            <person name="Wen Y."/>
            <person name="Hou Y."/>
            <person name="Yu J."/>
        </authorList>
    </citation>
    <scope>NUCLEOTIDE SEQUENCE [LARGE SCALE GENOMIC DNA]</scope>
    <source>
        <strain>301 / Serotype 2a</strain>
    </source>
</reference>
<reference key="2">
    <citation type="journal article" date="2003" name="Infect. Immun.">
        <title>Complete genome sequence and comparative genomics of Shigella flexneri serotype 2a strain 2457T.</title>
        <authorList>
            <person name="Wei J."/>
            <person name="Goldberg M.B."/>
            <person name="Burland V."/>
            <person name="Venkatesan M.M."/>
            <person name="Deng W."/>
            <person name="Fournier G."/>
            <person name="Mayhew G.F."/>
            <person name="Plunkett G. III"/>
            <person name="Rose D.J."/>
            <person name="Darling A."/>
            <person name="Mau B."/>
            <person name="Perna N.T."/>
            <person name="Payne S.M."/>
            <person name="Runyen-Janecky L.J."/>
            <person name="Zhou S."/>
            <person name="Schwartz D.C."/>
            <person name="Blattner F.R."/>
        </authorList>
    </citation>
    <scope>NUCLEOTIDE SEQUENCE [LARGE SCALE GENOMIC DNA]</scope>
    <source>
        <strain>ATCC 700930 / 2457T / Serotype 2a</strain>
    </source>
</reference>
<feature type="chain" id="PRO_0000194522" description="HTH-type transcriptional regulator GadX">
    <location>
        <begin position="1"/>
        <end position="274"/>
    </location>
</feature>
<feature type="domain" description="HTH araC/xylS-type" evidence="2">
    <location>
        <begin position="145"/>
        <end position="242"/>
    </location>
</feature>
<feature type="DNA-binding region" description="H-T-H motif" evidence="2">
    <location>
        <begin position="162"/>
        <end position="183"/>
    </location>
</feature>
<feature type="DNA-binding region" description="H-T-H motif" evidence="2">
    <location>
        <begin position="209"/>
        <end position="232"/>
    </location>
</feature>
<protein>
    <recommendedName>
        <fullName>HTH-type transcriptional regulator GadX</fullName>
    </recommendedName>
</protein>
<proteinExistence type="inferred from homology"/>
<evidence type="ECO:0000250" key="1"/>
<evidence type="ECO:0000255" key="2">
    <source>
        <dbReference type="PROSITE-ProRule" id="PRU00593"/>
    </source>
</evidence>
<name>GADX_SHIFL</name>
<comment type="function">
    <text evidence="1">Positively regulates the expression of about fifteen genes involved in acid resistance such as gadA, gadB and gadC. Depending on the conditions (growth phase and medium), can repress gadW (By similarity).</text>
</comment>
<comment type="subunit">
    <text evidence="1">Homodimer.</text>
</comment>
<comment type="induction">
    <text evidence="1">Expression can be activated by RpoS and repressed by CRP, H-NS and GadW, depending on the conditions.</text>
</comment>
<accession>Q83PR0</accession>
<accession>Q7BYZ7</accession>
<sequence length="274" mass="31452">MQSLHGNCLIAYARHKYILTMVNGEYRYFNGGDLVFADASQIRVDKCVENFVLVSRDTLSLFLPMLKEEALNLHAHKKISSLLVHHCSRDIPVFQEVAQLSQNKNLRYAEMLRKRALIFALLSVFLEDEHFIPLLLNVLQPNMRTRVCTVINNNIAHEWTLARIASELLMSPSLLKKKLREEETSYSQLLTECRMQRALQLIVIHGFSIKRVAVSCGYHSVSYFIYVFRNYYGMTPTEYQERSAQGLPNRDSAASIVAQGNFYGTNRSAEGIRL</sequence>
<gene>
    <name type="primary">gadX</name>
    <name type="ordered locus">SF3595</name>
    <name type="ordered locus">S4172</name>
</gene>
<keyword id="KW-0010">Activator</keyword>
<keyword id="KW-0238">DNA-binding</keyword>
<keyword id="KW-1185">Reference proteome</keyword>
<keyword id="KW-0678">Repressor</keyword>
<keyword id="KW-0804">Transcription</keyword>
<keyword id="KW-0805">Transcription regulation</keyword>